<comment type="function">
    <text evidence="1 4 9 12">Cytosolic dehydrogenase that catalyzes the irreversible oxidation of a wide range of aldehydes to their corresponding carboxylic acid (PubMed:12576512). Functions downstream of retinol dehydrogenases and catalyzes the oxidation of retinaldehyde into retinoic acid, the second step in the oxidation of retinol/vitamin A into retinoic acid (PubMed:12576512). This pathway is crucial to control the levels of retinol and retinoic acid, two important molecules which excess can be teratogenic and cytotoxic (Probable). Also oxidizes aldehydes resulting from lipid peroxidation like (E)-4-hydroxynon-2-enal/HNE, malonaldehyde and hexanal that form protein adducts and are highly cytotoxic. By participating for instance to the clearance of (E)-4-hydroxynon-2-enal/HNE in the lens epithelium prevents the formation of HNE-protein adducts and lens opacification. Also functions downstream of fructosamine-3-kinase in the fructosamine degradation pathway by catalyzing the oxidation of 3-deoxyglucosone, the carbohydrate product of fructosamine 3-phosphate decomposition, which is itself a potent glycating agent that may react with lysine and arginine side-chains of proteins (By similarity). Also has an aminobutyraldehyde dehydrogenase activity and is probably part of an alternative pathway for the biosynthesis of GABA/4-aminobutanoate in midbrain, thereby playing a role in GABAergic synaptic transmission (By similarity).</text>
</comment>
<comment type="catalytic activity">
    <reaction evidence="9">
        <text>an aldehyde + NAD(+) + H2O = a carboxylate + NADH + 2 H(+)</text>
        <dbReference type="Rhea" id="RHEA:16185"/>
        <dbReference type="ChEBI" id="CHEBI:15377"/>
        <dbReference type="ChEBI" id="CHEBI:15378"/>
        <dbReference type="ChEBI" id="CHEBI:17478"/>
        <dbReference type="ChEBI" id="CHEBI:29067"/>
        <dbReference type="ChEBI" id="CHEBI:57540"/>
        <dbReference type="ChEBI" id="CHEBI:57945"/>
        <dbReference type="EC" id="1.2.1.3"/>
    </reaction>
    <physiologicalReaction direction="left-to-right" evidence="12">
        <dbReference type="Rhea" id="RHEA:16186"/>
    </physiologicalReaction>
</comment>
<comment type="catalytic activity">
    <reaction evidence="9">
        <text>all-trans-retinal + NAD(+) + H2O = all-trans-retinoate + NADH + 2 H(+)</text>
        <dbReference type="Rhea" id="RHEA:42080"/>
        <dbReference type="ChEBI" id="CHEBI:15377"/>
        <dbReference type="ChEBI" id="CHEBI:15378"/>
        <dbReference type="ChEBI" id="CHEBI:17898"/>
        <dbReference type="ChEBI" id="CHEBI:35291"/>
        <dbReference type="ChEBI" id="CHEBI:57540"/>
        <dbReference type="ChEBI" id="CHEBI:57945"/>
        <dbReference type="EC" id="1.2.1.36"/>
    </reaction>
    <physiologicalReaction direction="left-to-right" evidence="12">
        <dbReference type="Rhea" id="RHEA:42081"/>
    </physiologicalReaction>
</comment>
<comment type="catalytic activity">
    <reaction evidence="9">
        <text>9-cis-retinal + NAD(+) + H2O = 9-cis-retinoate + NADH + 2 H(+)</text>
        <dbReference type="Rhea" id="RHEA:42084"/>
        <dbReference type="ChEBI" id="CHEBI:15377"/>
        <dbReference type="ChEBI" id="CHEBI:15378"/>
        <dbReference type="ChEBI" id="CHEBI:57540"/>
        <dbReference type="ChEBI" id="CHEBI:57945"/>
        <dbReference type="ChEBI" id="CHEBI:78273"/>
        <dbReference type="ChEBI" id="CHEBI:78630"/>
    </reaction>
    <physiologicalReaction direction="left-to-right" evidence="12">
        <dbReference type="Rhea" id="RHEA:42085"/>
    </physiologicalReaction>
</comment>
<comment type="catalytic activity">
    <reaction evidence="5">
        <text>11-cis-retinal + NAD(+) + H2O = 11-cis-retinoate + NADH + 2 H(+)</text>
        <dbReference type="Rhea" id="RHEA:47132"/>
        <dbReference type="ChEBI" id="CHEBI:15377"/>
        <dbReference type="ChEBI" id="CHEBI:15378"/>
        <dbReference type="ChEBI" id="CHEBI:16066"/>
        <dbReference type="ChEBI" id="CHEBI:57540"/>
        <dbReference type="ChEBI" id="CHEBI:57945"/>
        <dbReference type="ChEBI" id="CHEBI:87435"/>
    </reaction>
</comment>
<comment type="catalytic activity">
    <reaction evidence="9">
        <text>13-cis-retinal + NAD(+) + H2O = 13-cis-retinoate + NADH + 2 H(+)</text>
        <dbReference type="Rhea" id="RHEA:67332"/>
        <dbReference type="ChEBI" id="CHEBI:15377"/>
        <dbReference type="ChEBI" id="CHEBI:15378"/>
        <dbReference type="ChEBI" id="CHEBI:45487"/>
        <dbReference type="ChEBI" id="CHEBI:57540"/>
        <dbReference type="ChEBI" id="CHEBI:57945"/>
        <dbReference type="ChEBI" id="CHEBI:169952"/>
    </reaction>
    <physiologicalReaction direction="left-to-right" evidence="12">
        <dbReference type="Rhea" id="RHEA:67333"/>
    </physiologicalReaction>
</comment>
<comment type="catalytic activity">
    <reaction evidence="1">
        <text>3-deoxyglucosone + NAD(+) + H2O = 2-dehydro-3-deoxy-D-gluconate + NADH + 2 H(+)</text>
        <dbReference type="Rhea" id="RHEA:67244"/>
        <dbReference type="ChEBI" id="CHEBI:15377"/>
        <dbReference type="ChEBI" id="CHEBI:15378"/>
        <dbReference type="ChEBI" id="CHEBI:57540"/>
        <dbReference type="ChEBI" id="CHEBI:57945"/>
        <dbReference type="ChEBI" id="CHEBI:57990"/>
        <dbReference type="ChEBI" id="CHEBI:60777"/>
    </reaction>
    <physiologicalReaction direction="left-to-right" evidence="1">
        <dbReference type="Rhea" id="RHEA:67245"/>
    </physiologicalReaction>
</comment>
<comment type="catalytic activity">
    <reaction evidence="1">
        <text>(E)-4-hydroxynon-2-enal + NAD(+) + H2O = (E)-4-hydroxynon-2-enoate + NADH + 2 H(+)</text>
        <dbReference type="Rhea" id="RHEA:67248"/>
        <dbReference type="ChEBI" id="CHEBI:15377"/>
        <dbReference type="ChEBI" id="CHEBI:15378"/>
        <dbReference type="ChEBI" id="CHEBI:57540"/>
        <dbReference type="ChEBI" id="CHEBI:57945"/>
        <dbReference type="ChEBI" id="CHEBI:58968"/>
        <dbReference type="ChEBI" id="CHEBI:142920"/>
    </reaction>
    <physiologicalReaction direction="left-to-right" evidence="1">
        <dbReference type="Rhea" id="RHEA:67249"/>
    </physiologicalReaction>
</comment>
<comment type="catalytic activity">
    <reaction evidence="1">
        <text>malonaldehyde + NAD(+) + H2O = 3-oxopropanoate + NADH + 2 H(+)</text>
        <dbReference type="Rhea" id="RHEA:67252"/>
        <dbReference type="ChEBI" id="CHEBI:15377"/>
        <dbReference type="ChEBI" id="CHEBI:15378"/>
        <dbReference type="ChEBI" id="CHEBI:33190"/>
        <dbReference type="ChEBI" id="CHEBI:57540"/>
        <dbReference type="ChEBI" id="CHEBI:57945"/>
        <dbReference type="ChEBI" id="CHEBI:566274"/>
    </reaction>
    <physiologicalReaction direction="left-to-right" evidence="1">
        <dbReference type="Rhea" id="RHEA:67253"/>
    </physiologicalReaction>
</comment>
<comment type="catalytic activity">
    <reaction evidence="1">
        <text>hexanal + NAD(+) + H2O = hexanoate + NADH + 2 H(+)</text>
        <dbReference type="Rhea" id="RHEA:67276"/>
        <dbReference type="ChEBI" id="CHEBI:15377"/>
        <dbReference type="ChEBI" id="CHEBI:15378"/>
        <dbReference type="ChEBI" id="CHEBI:17120"/>
        <dbReference type="ChEBI" id="CHEBI:57540"/>
        <dbReference type="ChEBI" id="CHEBI:57945"/>
        <dbReference type="ChEBI" id="CHEBI:88528"/>
    </reaction>
    <physiologicalReaction direction="left-to-right" evidence="1">
        <dbReference type="Rhea" id="RHEA:67277"/>
    </physiologicalReaction>
</comment>
<comment type="catalytic activity">
    <reaction evidence="1">
        <text>propanal + NAD(+) + H2O = propanoate + NADH + 2 H(+)</text>
        <dbReference type="Rhea" id="RHEA:67256"/>
        <dbReference type="ChEBI" id="CHEBI:15377"/>
        <dbReference type="ChEBI" id="CHEBI:15378"/>
        <dbReference type="ChEBI" id="CHEBI:17153"/>
        <dbReference type="ChEBI" id="CHEBI:17272"/>
        <dbReference type="ChEBI" id="CHEBI:57540"/>
        <dbReference type="ChEBI" id="CHEBI:57945"/>
    </reaction>
    <physiologicalReaction direction="left-to-right" evidence="1">
        <dbReference type="Rhea" id="RHEA:67257"/>
    </physiologicalReaction>
</comment>
<comment type="catalytic activity">
    <reaction evidence="1">
        <text>acetaldehyde + NAD(+) + H2O = acetate + NADH + 2 H(+)</text>
        <dbReference type="Rhea" id="RHEA:25294"/>
        <dbReference type="ChEBI" id="CHEBI:15343"/>
        <dbReference type="ChEBI" id="CHEBI:15377"/>
        <dbReference type="ChEBI" id="CHEBI:15378"/>
        <dbReference type="ChEBI" id="CHEBI:30089"/>
        <dbReference type="ChEBI" id="CHEBI:57540"/>
        <dbReference type="ChEBI" id="CHEBI:57945"/>
        <dbReference type="EC" id="1.2.1.3"/>
    </reaction>
    <physiologicalReaction direction="left-to-right" evidence="1">
        <dbReference type="Rhea" id="RHEA:25295"/>
    </physiologicalReaction>
</comment>
<comment type="catalytic activity">
    <reaction evidence="1">
        <text>benzaldehyde + NAD(+) + H2O = benzoate + NADH + 2 H(+)</text>
        <dbReference type="Rhea" id="RHEA:11840"/>
        <dbReference type="ChEBI" id="CHEBI:15377"/>
        <dbReference type="ChEBI" id="CHEBI:15378"/>
        <dbReference type="ChEBI" id="CHEBI:16150"/>
        <dbReference type="ChEBI" id="CHEBI:17169"/>
        <dbReference type="ChEBI" id="CHEBI:57540"/>
        <dbReference type="ChEBI" id="CHEBI:57945"/>
        <dbReference type="EC" id="1.2.1.28"/>
    </reaction>
    <physiologicalReaction direction="left-to-right" evidence="1">
        <dbReference type="Rhea" id="RHEA:11841"/>
    </physiologicalReaction>
</comment>
<comment type="catalytic activity">
    <reaction evidence="4">
        <text>4-aminobutanal + NAD(+) + H2O = 4-aminobutanoate + NADH + 2 H(+)</text>
        <dbReference type="Rhea" id="RHEA:19105"/>
        <dbReference type="ChEBI" id="CHEBI:15377"/>
        <dbReference type="ChEBI" id="CHEBI:15378"/>
        <dbReference type="ChEBI" id="CHEBI:57540"/>
        <dbReference type="ChEBI" id="CHEBI:57945"/>
        <dbReference type="ChEBI" id="CHEBI:58264"/>
        <dbReference type="ChEBI" id="CHEBI:59888"/>
        <dbReference type="EC" id="1.2.1.19"/>
    </reaction>
    <physiologicalReaction direction="left-to-right" evidence="4">
        <dbReference type="Rhea" id="RHEA:19106"/>
    </physiologicalReaction>
</comment>
<comment type="biophysicochemical properties">
    <kinetics>
        <KM evidence="9">3.21 uM for all-trans retinal (at pH 7.5 and 25 degrees Celsius)</KM>
        <KM evidence="9">2.63 uM for 9-cis retinal (at pH 7.5 and 25 degrees Celsius)</KM>
        <KM evidence="9">1.51 uM for 13-cis retinal (at pH 7.5 and 25 degrees Celsius)</KM>
        <Vmax evidence="9">14.08 nmol/min/mg enzyme with all-trans retinal (at pH 7.5 and 25 degrees Celsius)</Vmax>
        <Vmax evidence="9">24.15 nmol/min/mg enzyme with 9-cis retinal (at pH 7.5 and 25 degrees Celsius)</Vmax>
        <Vmax evidence="9">9.35 nmol/min/mg enzyme with 13-cis retinal (at pH 7.5 and 25 degrees Celsius)</Vmax>
        <text evidence="9">Has a nearly 2-fold higher catalytic efficiency for 9-cis retinal compared to all-trans and 13-cis retinal.</text>
    </kinetics>
    <phDependence>
        <text evidence="9">Optimum pH is 9.0.</text>
    </phDependence>
</comment>
<comment type="pathway">
    <text evidence="9">Cofactor metabolism; retinol metabolism.</text>
</comment>
<comment type="subunit">
    <text evidence="1 6">Homotetramer (By similarity). Interacts with PRMT3; the interaction is direct, inhibits ALDH1A1 aldehyde dehydrogenase activity and is independent of the methyltransferase activity of PRMT3 (By similarity).</text>
</comment>
<comment type="subcellular location">
    <subcellularLocation>
        <location evidence="1">Cytoplasm</location>
        <location evidence="1">Cytosol</location>
    </subcellularLocation>
    <subcellularLocation>
        <location evidence="4">Cell projection</location>
        <location evidence="4">Axon</location>
    </subcellularLocation>
</comment>
<comment type="PTM">
    <text evidence="2">The N-terminus is blocked most probably by acetylation.</text>
</comment>
<comment type="similarity">
    <text evidence="11">Belongs to the aldehyde dehydrogenase family.</text>
</comment>
<keyword id="KW-0007">Acetylation</keyword>
<keyword id="KW-0966">Cell projection</keyword>
<keyword id="KW-0963">Cytoplasm</keyword>
<keyword id="KW-0443">Lipid metabolism</keyword>
<keyword id="KW-0520">NAD</keyword>
<keyword id="KW-0560">Oxidoreductase</keyword>
<keyword id="KW-0597">Phosphoprotein</keyword>
<keyword id="KW-1185">Reference proteome</keyword>
<proteinExistence type="evidence at protein level"/>
<accession>Q8HYE4</accession>
<name>AL1A1_MACFA</name>
<feature type="initiator methionine" description="Removed" evidence="2">
    <location>
        <position position="1"/>
    </location>
</feature>
<feature type="chain" id="PRO_0000056416" description="Aldehyde dehydrogenase 1A1">
    <location>
        <begin position="2"/>
        <end position="501"/>
    </location>
</feature>
<feature type="region of interest" description="Mediates interaction with PRMT3" evidence="1">
    <location>
        <begin position="336"/>
        <end position="501"/>
    </location>
</feature>
<feature type="active site" description="Proton acceptor" evidence="7 8">
    <location>
        <position position="269"/>
    </location>
</feature>
<feature type="active site" description="Nucleophile" evidence="7 8">
    <location>
        <position position="303"/>
    </location>
</feature>
<feature type="binding site" evidence="1">
    <location>
        <begin position="167"/>
        <end position="170"/>
    </location>
    <ligand>
        <name>NAD(+)</name>
        <dbReference type="ChEBI" id="CHEBI:57540"/>
    </ligand>
</feature>
<feature type="binding site" evidence="1">
    <location>
        <begin position="193"/>
        <end position="196"/>
    </location>
    <ligand>
        <name>NAD(+)</name>
        <dbReference type="ChEBI" id="CHEBI:57540"/>
    </ligand>
</feature>
<feature type="binding site" evidence="1">
    <location>
        <begin position="226"/>
        <end position="227"/>
    </location>
    <ligand>
        <name>NAD(+)</name>
        <dbReference type="ChEBI" id="CHEBI:57540"/>
    </ligand>
</feature>
<feature type="binding site" evidence="1">
    <location>
        <begin position="246"/>
        <end position="247"/>
    </location>
    <ligand>
        <name>NAD(+)</name>
        <dbReference type="ChEBI" id="CHEBI:57540"/>
    </ligand>
</feature>
<feature type="binding site" evidence="1">
    <location>
        <begin position="269"/>
        <end position="271"/>
    </location>
    <ligand>
        <name>NAD(+)</name>
        <dbReference type="ChEBI" id="CHEBI:57540"/>
    </ligand>
</feature>
<feature type="binding site" evidence="1">
    <location>
        <begin position="349"/>
        <end position="353"/>
    </location>
    <ligand>
        <name>NAD(+)</name>
        <dbReference type="ChEBI" id="CHEBI:57540"/>
    </ligand>
</feature>
<feature type="binding site" evidence="1">
    <location>
        <begin position="400"/>
        <end position="402"/>
    </location>
    <ligand>
        <name>NAD(+)</name>
        <dbReference type="ChEBI" id="CHEBI:57540"/>
    </ligand>
</feature>
<feature type="site" description="Transition state stabilizer" evidence="3">
    <location>
        <position position="170"/>
    </location>
</feature>
<feature type="modified residue" description="N-acetylserine" evidence="2">
    <location>
        <position position="2"/>
    </location>
</feature>
<feature type="modified residue" description="N6-acetyllysine" evidence="1">
    <location>
        <position position="91"/>
    </location>
</feature>
<feature type="modified residue" description="N6-acetyllysine" evidence="1">
    <location>
        <position position="128"/>
    </location>
</feature>
<feature type="modified residue" description="N6-acetyllysine" evidence="1">
    <location>
        <position position="252"/>
    </location>
</feature>
<feature type="modified residue" description="Phosphothreonine" evidence="1">
    <location>
        <position position="337"/>
    </location>
</feature>
<feature type="modified residue" description="N6-acetyllysine" evidence="1">
    <location>
        <position position="353"/>
    </location>
</feature>
<feature type="modified residue" description="N6-acetyllysine" evidence="1">
    <location>
        <position position="367"/>
    </location>
</feature>
<feature type="modified residue" description="N6-acetyllysine" evidence="1">
    <location>
        <position position="410"/>
    </location>
</feature>
<feature type="modified residue" description="Phosphoserine" evidence="1">
    <location>
        <position position="413"/>
    </location>
</feature>
<feature type="modified residue" description="N6-acetyllysine" evidence="1">
    <location>
        <position position="419"/>
    </location>
</feature>
<feature type="modified residue" description="N6-acetyllysine" evidence="1">
    <location>
        <position position="495"/>
    </location>
</feature>
<protein>
    <recommendedName>
        <fullName evidence="12">Aldehyde dehydrogenase 1A1</fullName>
        <ecNumber evidence="4">1.2.1.19</ecNumber>
        <ecNumber evidence="1">1.2.1.28</ecNumber>
        <ecNumber evidence="9">1.2.1.3</ecNumber>
        <ecNumber evidence="9">1.2.1.36</ecNumber>
    </recommendedName>
    <alternativeName>
        <fullName evidence="1">3-deoxyglucosone dehydrogenase</fullName>
    </alternativeName>
    <alternativeName>
        <fullName>ALDH-E1</fullName>
    </alternativeName>
    <alternativeName>
        <fullName>ALHDII</fullName>
    </alternativeName>
    <alternativeName>
        <fullName>Aldehyde dehydrogenase family 1 member A1</fullName>
    </alternativeName>
    <alternativeName>
        <fullName evidence="11">Aldehyde dehydrogenase, cytosolic</fullName>
    </alternativeName>
    <alternativeName>
        <fullName evidence="10">Retinal dehydrogenase 1</fullName>
        <shortName evidence="10">RALDH 1</shortName>
        <shortName evidence="10">RalDH1</shortName>
    </alternativeName>
</protein>
<reference key="1">
    <citation type="journal article" date="2003" name="J. Lipid Res.">
        <title>Cloning of monkey RALDH1 and characterization of retinoid metabolism in monkey kidney proximal tubule cells.</title>
        <authorList>
            <person name="Brodeur H."/>
            <person name="Gagnon I."/>
            <person name="Mader S."/>
            <person name="Bhat P.V."/>
        </authorList>
    </citation>
    <scope>NUCLEOTIDE SEQUENCE [MRNA]</scope>
    <scope>FUNCTION</scope>
    <scope>CATALYTIC ACTIVITY</scope>
    <scope>BIOPHYSICOCHEMICAL PROPERTIES</scope>
    <scope>PATHWAY</scope>
    <source>
        <tissue>Kidney proximal tubule</tissue>
    </source>
</reference>
<evidence type="ECO:0000250" key="1">
    <source>
        <dbReference type="UniProtKB" id="P00352"/>
    </source>
</evidence>
<evidence type="ECO:0000250" key="2">
    <source>
        <dbReference type="UniProtKB" id="P15437"/>
    </source>
</evidence>
<evidence type="ECO:0000250" key="3">
    <source>
        <dbReference type="UniProtKB" id="P20000"/>
    </source>
</evidence>
<evidence type="ECO:0000250" key="4">
    <source>
        <dbReference type="UniProtKB" id="P24549"/>
    </source>
</evidence>
<evidence type="ECO:0000250" key="5">
    <source>
        <dbReference type="UniProtKB" id="P51647"/>
    </source>
</evidence>
<evidence type="ECO:0000250" key="6">
    <source>
        <dbReference type="UniProtKB" id="P51977"/>
    </source>
</evidence>
<evidence type="ECO:0000255" key="7">
    <source>
        <dbReference type="PROSITE-ProRule" id="PRU10007"/>
    </source>
</evidence>
<evidence type="ECO:0000255" key="8">
    <source>
        <dbReference type="PROSITE-ProRule" id="PRU10008"/>
    </source>
</evidence>
<evidence type="ECO:0000269" key="9">
    <source>
    </source>
</evidence>
<evidence type="ECO:0000303" key="10">
    <source>
    </source>
</evidence>
<evidence type="ECO:0000305" key="11"/>
<evidence type="ECO:0000305" key="12">
    <source>
    </source>
</evidence>
<organism>
    <name type="scientific">Macaca fascicularis</name>
    <name type="common">Crab-eating macaque</name>
    <name type="synonym">Cynomolgus monkey</name>
    <dbReference type="NCBI Taxonomy" id="9541"/>
    <lineage>
        <taxon>Eukaryota</taxon>
        <taxon>Metazoa</taxon>
        <taxon>Chordata</taxon>
        <taxon>Craniata</taxon>
        <taxon>Vertebrata</taxon>
        <taxon>Euteleostomi</taxon>
        <taxon>Mammalia</taxon>
        <taxon>Eutheria</taxon>
        <taxon>Euarchontoglires</taxon>
        <taxon>Primates</taxon>
        <taxon>Haplorrhini</taxon>
        <taxon>Catarrhini</taxon>
        <taxon>Cercopithecidae</taxon>
        <taxon>Cercopithecinae</taxon>
        <taxon>Macaca</taxon>
    </lineage>
</organism>
<gene>
    <name evidence="1" type="primary">ALDH1A1</name>
</gene>
<sequence>MSSSGTSDLPVLPTDLKIQYTKIFINNEWHDSVSGKKFPVFNPATEEELCQVEEGDKADVDKAVKAARQAFQIGSPWRTMDASERGRLLYKLADLIERDRLLLATMESMNGGKLYSNAYLNDLAGCIKTLRYCAGWADKIQGRTIPIDGNFFTYTRHEPIGVCGQIIPWNFPLVMLIWKIGPALSCGNTVVVKPAEQTPLTALHVASLIKEAGFPPGVVNIVPGYGPTAGAAISSHMDIDKVAFTGSTEVGKLIKEAAGKSNLKRVTLELGGKSPCIVLADADLDNAVEFAHHGVFYHQGQCCIAASRIFVEESIYDEFVRRSVERAKKYILGNPLTPGATQGPQIDKEQYDKILDLIESGKKEGAKLECGGGPWGNKGYFVQPTVFSNVTDEMRIAKEEIFGPVQQIMKFKSLDDVIKRANNTFYGLSAGVFTNDIDKAVTISSALQAGTVWVNCYGVVTAQCPFGGFKMSGNGRELGEYGFHEYTEVKTVTVKISQKNS</sequence>
<dbReference type="EC" id="1.2.1.19" evidence="4"/>
<dbReference type="EC" id="1.2.1.28" evidence="1"/>
<dbReference type="EC" id="1.2.1.3" evidence="9"/>
<dbReference type="EC" id="1.2.1.36" evidence="9"/>
<dbReference type="EMBL" id="AF542418">
    <property type="protein sequence ID" value="AAN85861.1"/>
    <property type="molecule type" value="mRNA"/>
</dbReference>
<dbReference type="SMR" id="Q8HYE4"/>
<dbReference type="STRING" id="9541.ENSMFAP00000038908"/>
<dbReference type="eggNOG" id="KOG2450">
    <property type="taxonomic scope" value="Eukaryota"/>
</dbReference>
<dbReference type="UniPathway" id="UPA00912"/>
<dbReference type="Proteomes" id="UP000233100">
    <property type="component" value="Unplaced"/>
</dbReference>
<dbReference type="GO" id="GO:0030424">
    <property type="term" value="C:axon"/>
    <property type="evidence" value="ECO:0000250"/>
    <property type="project" value="UniProtKB"/>
</dbReference>
<dbReference type="GO" id="GO:0005829">
    <property type="term" value="C:cytosol"/>
    <property type="evidence" value="ECO:0000250"/>
    <property type="project" value="UniProtKB"/>
</dbReference>
<dbReference type="GO" id="GO:0045202">
    <property type="term" value="C:synapse"/>
    <property type="evidence" value="ECO:0000250"/>
    <property type="project" value="UniProtKB"/>
</dbReference>
<dbReference type="GO" id="GO:0106373">
    <property type="term" value="F:3-deoxyglucosone dehydrogenase activity"/>
    <property type="evidence" value="ECO:0000250"/>
    <property type="project" value="UniProtKB"/>
</dbReference>
<dbReference type="GO" id="GO:0140087">
    <property type="term" value="F:acetaldehyde dehydrogenase (NAD+) activity"/>
    <property type="evidence" value="ECO:0007669"/>
    <property type="project" value="RHEA"/>
</dbReference>
<dbReference type="GO" id="GO:0019145">
    <property type="term" value="F:aminobutyraldehyde dehydrogenase (NAD+) activity"/>
    <property type="evidence" value="ECO:0000250"/>
    <property type="project" value="UniProtKB"/>
</dbReference>
<dbReference type="GO" id="GO:0018479">
    <property type="term" value="F:benzaldehyde dehydrogenase (NAD+) activity"/>
    <property type="evidence" value="ECO:0007669"/>
    <property type="project" value="RHEA"/>
</dbReference>
<dbReference type="GO" id="GO:0001758">
    <property type="term" value="F:retinal dehydrogenase activity"/>
    <property type="evidence" value="ECO:0000314"/>
    <property type="project" value="UniProtKB"/>
</dbReference>
<dbReference type="GO" id="GO:0110095">
    <property type="term" value="P:cellular detoxification of aldehyde"/>
    <property type="evidence" value="ECO:0000250"/>
    <property type="project" value="UniProtKB"/>
</dbReference>
<dbReference type="GO" id="GO:0030392">
    <property type="term" value="P:fructosamine catabolic process"/>
    <property type="evidence" value="ECO:0000250"/>
    <property type="project" value="UniProtKB"/>
</dbReference>
<dbReference type="GO" id="GO:0009449">
    <property type="term" value="P:gamma-aminobutyric acid biosynthetic process"/>
    <property type="evidence" value="ECO:0000250"/>
    <property type="project" value="UniProtKB"/>
</dbReference>
<dbReference type="GO" id="GO:0036438">
    <property type="term" value="P:maintenance of lens transparency"/>
    <property type="evidence" value="ECO:0000250"/>
    <property type="project" value="UniProtKB"/>
</dbReference>
<dbReference type="GO" id="GO:0001523">
    <property type="term" value="P:retinoid metabolic process"/>
    <property type="evidence" value="ECO:0000314"/>
    <property type="project" value="UniProtKB"/>
</dbReference>
<dbReference type="GO" id="GO:0042572">
    <property type="term" value="P:retinol metabolic process"/>
    <property type="evidence" value="ECO:0007669"/>
    <property type="project" value="UniProtKB-UniPathway"/>
</dbReference>
<dbReference type="CDD" id="cd07141">
    <property type="entry name" value="ALDH_F1AB_F2_RALDH1"/>
    <property type="match status" value="1"/>
</dbReference>
<dbReference type="FunFam" id="3.40.605.10:FF:000029">
    <property type="entry name" value="Aldehyde dehydrogenase, mitochondrial"/>
    <property type="match status" value="1"/>
</dbReference>
<dbReference type="FunFam" id="3.40.605.10:FF:000026">
    <property type="entry name" value="Aldehyde dehydrogenase, putative"/>
    <property type="match status" value="1"/>
</dbReference>
<dbReference type="FunFam" id="3.40.309.10:FF:000001">
    <property type="entry name" value="Mitochondrial aldehyde dehydrogenase 2"/>
    <property type="match status" value="1"/>
</dbReference>
<dbReference type="Gene3D" id="3.40.605.10">
    <property type="entry name" value="Aldehyde Dehydrogenase, Chain A, domain 1"/>
    <property type="match status" value="1"/>
</dbReference>
<dbReference type="Gene3D" id="3.40.309.10">
    <property type="entry name" value="Aldehyde Dehydrogenase, Chain A, domain 2"/>
    <property type="match status" value="1"/>
</dbReference>
<dbReference type="InterPro" id="IPR016161">
    <property type="entry name" value="Ald_DH/histidinol_DH"/>
</dbReference>
<dbReference type="InterPro" id="IPR016163">
    <property type="entry name" value="Ald_DH_C"/>
</dbReference>
<dbReference type="InterPro" id="IPR016160">
    <property type="entry name" value="Ald_DH_CS_CYS"/>
</dbReference>
<dbReference type="InterPro" id="IPR029510">
    <property type="entry name" value="Ald_DH_CS_GLU"/>
</dbReference>
<dbReference type="InterPro" id="IPR016162">
    <property type="entry name" value="Ald_DH_N"/>
</dbReference>
<dbReference type="InterPro" id="IPR015590">
    <property type="entry name" value="Aldehyde_DH_dom"/>
</dbReference>
<dbReference type="PANTHER" id="PTHR11699">
    <property type="entry name" value="ALDEHYDE DEHYDROGENASE-RELATED"/>
    <property type="match status" value="1"/>
</dbReference>
<dbReference type="Pfam" id="PF00171">
    <property type="entry name" value="Aldedh"/>
    <property type="match status" value="1"/>
</dbReference>
<dbReference type="SUPFAM" id="SSF53720">
    <property type="entry name" value="ALDH-like"/>
    <property type="match status" value="1"/>
</dbReference>
<dbReference type="PROSITE" id="PS00070">
    <property type="entry name" value="ALDEHYDE_DEHYDR_CYS"/>
    <property type="match status" value="1"/>
</dbReference>
<dbReference type="PROSITE" id="PS00687">
    <property type="entry name" value="ALDEHYDE_DEHYDR_GLU"/>
    <property type="match status" value="1"/>
</dbReference>